<protein>
    <recommendedName>
        <fullName evidence="1">N-(5'-phosphoribosyl)anthranilate isomerase</fullName>
        <shortName evidence="1">PRAI</shortName>
        <ecNumber evidence="1">5.3.1.24</ecNumber>
    </recommendedName>
</protein>
<keyword id="KW-0028">Amino-acid biosynthesis</keyword>
<keyword id="KW-0057">Aromatic amino acid biosynthesis</keyword>
<keyword id="KW-0413">Isomerase</keyword>
<keyword id="KW-0822">Tryptophan biosynthesis</keyword>
<proteinExistence type="inferred from homology"/>
<comment type="catalytic activity">
    <reaction evidence="1">
        <text>N-(5-phospho-beta-D-ribosyl)anthranilate = 1-(2-carboxyphenylamino)-1-deoxy-D-ribulose 5-phosphate</text>
        <dbReference type="Rhea" id="RHEA:21540"/>
        <dbReference type="ChEBI" id="CHEBI:18277"/>
        <dbReference type="ChEBI" id="CHEBI:58613"/>
        <dbReference type="EC" id="5.3.1.24"/>
    </reaction>
</comment>
<comment type="pathway">
    <text evidence="1">Amino-acid biosynthesis; L-tryptophan biosynthesis; L-tryptophan from chorismate: step 3/5.</text>
</comment>
<comment type="similarity">
    <text evidence="1">Belongs to the TrpF family.</text>
</comment>
<evidence type="ECO:0000255" key="1">
    <source>
        <dbReference type="HAMAP-Rule" id="MF_00135"/>
    </source>
</evidence>
<reference key="1">
    <citation type="journal article" date="2005" name="Science">
        <title>Genome sequence of the PCE-dechlorinating bacterium Dehalococcoides ethenogenes.</title>
        <authorList>
            <person name="Seshadri R."/>
            <person name="Adrian L."/>
            <person name="Fouts D.E."/>
            <person name="Eisen J.A."/>
            <person name="Phillippy A.M."/>
            <person name="Methe B.A."/>
            <person name="Ward N.L."/>
            <person name="Nelson W.C."/>
            <person name="DeBoy R.T."/>
            <person name="Khouri H.M."/>
            <person name="Kolonay J.F."/>
            <person name="Dodson R.J."/>
            <person name="Daugherty S.C."/>
            <person name="Brinkac L.M."/>
            <person name="Sullivan S.A."/>
            <person name="Madupu R."/>
            <person name="Nelson K.E."/>
            <person name="Kang K.H."/>
            <person name="Impraim M."/>
            <person name="Tran K."/>
            <person name="Robinson J.M."/>
            <person name="Forberger H.A."/>
            <person name="Fraser C.M."/>
            <person name="Zinder S.H."/>
            <person name="Heidelberg J.F."/>
        </authorList>
    </citation>
    <scope>NUCLEOTIDE SEQUENCE [LARGE SCALE GENOMIC DNA]</scope>
    <source>
        <strain>ATCC BAA-2266 / KCTC 15142 / 195</strain>
    </source>
</reference>
<name>TRPF_DEHM1</name>
<gene>
    <name evidence="1" type="primary">trpF</name>
    <name type="ordered locus">DET1485</name>
</gene>
<feature type="chain" id="PRO_1000018591" description="N-(5'-phosphoribosyl)anthranilate isomerase">
    <location>
        <begin position="1"/>
        <end position="219"/>
    </location>
</feature>
<sequence>MIKTKICGLTEVGQALATARTGADFAGVVFAESKRRITTEKALEIAEALKPLNPRPMLVGVFANQTAEEVNRIASVCRLDRVQLSGNESWEYCNQVNLPVIKVIHVAEGTTAELVIQEIQAGLKALKKTPVFLLDTHTKALFGGSGQSFDWQIVKQVSLKYPVMVAGGLNPENIQGFIKIAKPWGIDVASGVETDGIKDTAKIHLFIERVKDADGNRIC</sequence>
<accession>Q3Z6G4</accession>
<dbReference type="EC" id="5.3.1.24" evidence="1"/>
<dbReference type="EMBL" id="CP000027">
    <property type="protein sequence ID" value="AAW39327.1"/>
    <property type="molecule type" value="Genomic_DNA"/>
</dbReference>
<dbReference type="RefSeq" id="WP_010937162.1">
    <property type="nucleotide sequence ID" value="NC_002936.3"/>
</dbReference>
<dbReference type="SMR" id="Q3Z6G4"/>
<dbReference type="FunCoup" id="Q3Z6G4">
    <property type="interactions" value="165"/>
</dbReference>
<dbReference type="STRING" id="243164.DET1485"/>
<dbReference type="GeneID" id="3229285"/>
<dbReference type="KEGG" id="det:DET1485"/>
<dbReference type="PATRIC" id="fig|243164.10.peg.1401"/>
<dbReference type="eggNOG" id="COG0135">
    <property type="taxonomic scope" value="Bacteria"/>
</dbReference>
<dbReference type="HOGENOM" id="CLU_076364_2_0_0"/>
<dbReference type="InParanoid" id="Q3Z6G4"/>
<dbReference type="UniPathway" id="UPA00035">
    <property type="reaction ID" value="UER00042"/>
</dbReference>
<dbReference type="Proteomes" id="UP000008289">
    <property type="component" value="Chromosome"/>
</dbReference>
<dbReference type="GO" id="GO:0004640">
    <property type="term" value="F:phosphoribosylanthranilate isomerase activity"/>
    <property type="evidence" value="ECO:0007669"/>
    <property type="project" value="UniProtKB-UniRule"/>
</dbReference>
<dbReference type="GO" id="GO:0000162">
    <property type="term" value="P:L-tryptophan biosynthetic process"/>
    <property type="evidence" value="ECO:0007669"/>
    <property type="project" value="UniProtKB-UniRule"/>
</dbReference>
<dbReference type="CDD" id="cd00405">
    <property type="entry name" value="PRAI"/>
    <property type="match status" value="1"/>
</dbReference>
<dbReference type="Gene3D" id="3.20.20.70">
    <property type="entry name" value="Aldolase class I"/>
    <property type="match status" value="1"/>
</dbReference>
<dbReference type="HAMAP" id="MF_00135">
    <property type="entry name" value="PRAI"/>
    <property type="match status" value="1"/>
</dbReference>
<dbReference type="InterPro" id="IPR013785">
    <property type="entry name" value="Aldolase_TIM"/>
</dbReference>
<dbReference type="InterPro" id="IPR001240">
    <property type="entry name" value="PRAI_dom"/>
</dbReference>
<dbReference type="InterPro" id="IPR011060">
    <property type="entry name" value="RibuloseP-bd_barrel"/>
</dbReference>
<dbReference type="InterPro" id="IPR044643">
    <property type="entry name" value="TrpF_fam"/>
</dbReference>
<dbReference type="PANTHER" id="PTHR42894">
    <property type="entry name" value="N-(5'-PHOSPHORIBOSYL)ANTHRANILATE ISOMERASE"/>
    <property type="match status" value="1"/>
</dbReference>
<dbReference type="PANTHER" id="PTHR42894:SF1">
    <property type="entry name" value="N-(5'-PHOSPHORIBOSYL)ANTHRANILATE ISOMERASE"/>
    <property type="match status" value="1"/>
</dbReference>
<dbReference type="Pfam" id="PF00697">
    <property type="entry name" value="PRAI"/>
    <property type="match status" value="1"/>
</dbReference>
<dbReference type="SUPFAM" id="SSF51366">
    <property type="entry name" value="Ribulose-phoshate binding barrel"/>
    <property type="match status" value="1"/>
</dbReference>
<organism>
    <name type="scientific">Dehalococcoides mccartyi (strain ATCC BAA-2266 / KCTC 15142 / 195)</name>
    <name type="common">Dehalococcoides ethenogenes (strain 195)</name>
    <dbReference type="NCBI Taxonomy" id="243164"/>
    <lineage>
        <taxon>Bacteria</taxon>
        <taxon>Bacillati</taxon>
        <taxon>Chloroflexota</taxon>
        <taxon>Dehalococcoidia</taxon>
        <taxon>Dehalococcoidales</taxon>
        <taxon>Dehalococcoidaceae</taxon>
        <taxon>Dehalococcoides</taxon>
    </lineage>
</organism>